<proteinExistence type="inferred from homology"/>
<protein>
    <recommendedName>
        <fullName evidence="1">Glycerol-3-phosphate dehydrogenase [NAD(P)+]</fullName>
        <ecNumber evidence="1">1.1.1.94</ecNumber>
    </recommendedName>
    <alternativeName>
        <fullName evidence="1">NAD(P)(+)-dependent glycerol-3-phosphate dehydrogenase</fullName>
    </alternativeName>
    <alternativeName>
        <fullName evidence="1">NAD(P)H-dependent dihydroxyacetone-phosphate reductase</fullName>
    </alternativeName>
</protein>
<accession>Q2Y9Z2</accession>
<comment type="function">
    <text evidence="1">Catalyzes the reduction of the glycolytic intermediate dihydroxyacetone phosphate (DHAP) to sn-glycerol 3-phosphate (G3P), the key precursor for phospholipid synthesis.</text>
</comment>
<comment type="catalytic activity">
    <reaction evidence="1">
        <text>sn-glycerol 3-phosphate + NAD(+) = dihydroxyacetone phosphate + NADH + H(+)</text>
        <dbReference type="Rhea" id="RHEA:11092"/>
        <dbReference type="ChEBI" id="CHEBI:15378"/>
        <dbReference type="ChEBI" id="CHEBI:57540"/>
        <dbReference type="ChEBI" id="CHEBI:57597"/>
        <dbReference type="ChEBI" id="CHEBI:57642"/>
        <dbReference type="ChEBI" id="CHEBI:57945"/>
        <dbReference type="EC" id="1.1.1.94"/>
    </reaction>
    <physiologicalReaction direction="right-to-left" evidence="1">
        <dbReference type="Rhea" id="RHEA:11094"/>
    </physiologicalReaction>
</comment>
<comment type="catalytic activity">
    <reaction evidence="1">
        <text>sn-glycerol 3-phosphate + NADP(+) = dihydroxyacetone phosphate + NADPH + H(+)</text>
        <dbReference type="Rhea" id="RHEA:11096"/>
        <dbReference type="ChEBI" id="CHEBI:15378"/>
        <dbReference type="ChEBI" id="CHEBI:57597"/>
        <dbReference type="ChEBI" id="CHEBI:57642"/>
        <dbReference type="ChEBI" id="CHEBI:57783"/>
        <dbReference type="ChEBI" id="CHEBI:58349"/>
        <dbReference type="EC" id="1.1.1.94"/>
    </reaction>
    <physiologicalReaction direction="right-to-left" evidence="1">
        <dbReference type="Rhea" id="RHEA:11098"/>
    </physiologicalReaction>
</comment>
<comment type="pathway">
    <text evidence="1">Membrane lipid metabolism; glycerophospholipid metabolism.</text>
</comment>
<comment type="subcellular location">
    <subcellularLocation>
        <location evidence="1">Cytoplasm</location>
    </subcellularLocation>
</comment>
<comment type="similarity">
    <text evidence="1">Belongs to the NAD-dependent glycerol-3-phosphate dehydrogenase family.</text>
</comment>
<feature type="chain" id="PRO_0000255339" description="Glycerol-3-phosphate dehydrogenase [NAD(P)+]">
    <location>
        <begin position="1"/>
        <end position="333"/>
    </location>
</feature>
<feature type="active site" description="Proton acceptor" evidence="1">
    <location>
        <position position="191"/>
    </location>
</feature>
<feature type="binding site" evidence="1">
    <location>
        <position position="11"/>
    </location>
    <ligand>
        <name>NADPH</name>
        <dbReference type="ChEBI" id="CHEBI:57783"/>
    </ligand>
</feature>
<feature type="binding site" evidence="1">
    <location>
        <position position="34"/>
    </location>
    <ligand>
        <name>NADPH</name>
        <dbReference type="ChEBI" id="CHEBI:57783"/>
    </ligand>
</feature>
<feature type="binding site" evidence="1">
    <location>
        <position position="107"/>
    </location>
    <ligand>
        <name>NADPH</name>
        <dbReference type="ChEBI" id="CHEBI:57783"/>
    </ligand>
</feature>
<feature type="binding site" evidence="1">
    <location>
        <position position="107"/>
    </location>
    <ligand>
        <name>sn-glycerol 3-phosphate</name>
        <dbReference type="ChEBI" id="CHEBI:57597"/>
    </ligand>
</feature>
<feature type="binding site" evidence="1">
    <location>
        <position position="136"/>
    </location>
    <ligand>
        <name>sn-glycerol 3-phosphate</name>
        <dbReference type="ChEBI" id="CHEBI:57597"/>
    </ligand>
</feature>
<feature type="binding site" evidence="1">
    <location>
        <position position="138"/>
    </location>
    <ligand>
        <name>sn-glycerol 3-phosphate</name>
        <dbReference type="ChEBI" id="CHEBI:57597"/>
    </ligand>
</feature>
<feature type="binding site" evidence="1">
    <location>
        <position position="140"/>
    </location>
    <ligand>
        <name>NADPH</name>
        <dbReference type="ChEBI" id="CHEBI:57783"/>
    </ligand>
</feature>
<feature type="binding site" evidence="1">
    <location>
        <position position="191"/>
    </location>
    <ligand>
        <name>sn-glycerol 3-phosphate</name>
        <dbReference type="ChEBI" id="CHEBI:57597"/>
    </ligand>
</feature>
<feature type="binding site" evidence="1">
    <location>
        <position position="244"/>
    </location>
    <ligand>
        <name>sn-glycerol 3-phosphate</name>
        <dbReference type="ChEBI" id="CHEBI:57597"/>
    </ligand>
</feature>
<feature type="binding site" evidence="1">
    <location>
        <position position="254"/>
    </location>
    <ligand>
        <name>sn-glycerol 3-phosphate</name>
        <dbReference type="ChEBI" id="CHEBI:57597"/>
    </ligand>
</feature>
<feature type="binding site" evidence="1">
    <location>
        <position position="255"/>
    </location>
    <ligand>
        <name>NADPH</name>
        <dbReference type="ChEBI" id="CHEBI:57783"/>
    </ligand>
</feature>
<feature type="binding site" evidence="1">
    <location>
        <position position="255"/>
    </location>
    <ligand>
        <name>sn-glycerol 3-phosphate</name>
        <dbReference type="ChEBI" id="CHEBI:57597"/>
    </ligand>
</feature>
<feature type="binding site" evidence="1">
    <location>
        <position position="256"/>
    </location>
    <ligand>
        <name>sn-glycerol 3-phosphate</name>
        <dbReference type="ChEBI" id="CHEBI:57597"/>
    </ligand>
</feature>
<feature type="binding site" evidence="1">
    <location>
        <position position="279"/>
    </location>
    <ligand>
        <name>NADPH</name>
        <dbReference type="ChEBI" id="CHEBI:57783"/>
    </ligand>
</feature>
<feature type="binding site" evidence="1">
    <location>
        <position position="281"/>
    </location>
    <ligand>
        <name>NADPH</name>
        <dbReference type="ChEBI" id="CHEBI:57783"/>
    </ligand>
</feature>
<gene>
    <name evidence="1" type="primary">gpsA</name>
    <name type="ordered locus">Nmul_A1126</name>
</gene>
<reference key="1">
    <citation type="submission" date="2005-08" db="EMBL/GenBank/DDBJ databases">
        <title>Complete sequence of chromosome 1 of Nitrosospira multiformis ATCC 25196.</title>
        <authorList>
            <person name="Copeland A."/>
            <person name="Lucas S."/>
            <person name="Lapidus A."/>
            <person name="Barry K."/>
            <person name="Detter J.C."/>
            <person name="Glavina T."/>
            <person name="Hammon N."/>
            <person name="Israni S."/>
            <person name="Pitluck S."/>
            <person name="Chain P."/>
            <person name="Malfatti S."/>
            <person name="Shin M."/>
            <person name="Vergez L."/>
            <person name="Schmutz J."/>
            <person name="Larimer F."/>
            <person name="Land M."/>
            <person name="Hauser L."/>
            <person name="Kyrpides N."/>
            <person name="Lykidis A."/>
            <person name="Richardson P."/>
        </authorList>
    </citation>
    <scope>NUCLEOTIDE SEQUENCE [LARGE SCALE GENOMIC DNA]</scope>
    <source>
        <strain>ATCC 25196 / NCIMB 11849 / C 71</strain>
    </source>
</reference>
<dbReference type="EC" id="1.1.1.94" evidence="1"/>
<dbReference type="EMBL" id="CP000103">
    <property type="protein sequence ID" value="ABB74429.1"/>
    <property type="molecule type" value="Genomic_DNA"/>
</dbReference>
<dbReference type="RefSeq" id="WP_011380470.1">
    <property type="nucleotide sequence ID" value="NC_007614.1"/>
</dbReference>
<dbReference type="SMR" id="Q2Y9Z2"/>
<dbReference type="STRING" id="323848.Nmul_A1126"/>
<dbReference type="KEGG" id="nmu:Nmul_A1126"/>
<dbReference type="eggNOG" id="COG0240">
    <property type="taxonomic scope" value="Bacteria"/>
</dbReference>
<dbReference type="HOGENOM" id="CLU_033449_0_2_4"/>
<dbReference type="OrthoDB" id="9812273at2"/>
<dbReference type="UniPathway" id="UPA00940"/>
<dbReference type="Proteomes" id="UP000002718">
    <property type="component" value="Chromosome"/>
</dbReference>
<dbReference type="GO" id="GO:0005829">
    <property type="term" value="C:cytosol"/>
    <property type="evidence" value="ECO:0007669"/>
    <property type="project" value="TreeGrafter"/>
</dbReference>
<dbReference type="GO" id="GO:0047952">
    <property type="term" value="F:glycerol-3-phosphate dehydrogenase [NAD(P)+] activity"/>
    <property type="evidence" value="ECO:0007669"/>
    <property type="project" value="UniProtKB-UniRule"/>
</dbReference>
<dbReference type="GO" id="GO:0051287">
    <property type="term" value="F:NAD binding"/>
    <property type="evidence" value="ECO:0007669"/>
    <property type="project" value="InterPro"/>
</dbReference>
<dbReference type="GO" id="GO:0005975">
    <property type="term" value="P:carbohydrate metabolic process"/>
    <property type="evidence" value="ECO:0007669"/>
    <property type="project" value="InterPro"/>
</dbReference>
<dbReference type="GO" id="GO:0046167">
    <property type="term" value="P:glycerol-3-phosphate biosynthetic process"/>
    <property type="evidence" value="ECO:0007669"/>
    <property type="project" value="UniProtKB-UniRule"/>
</dbReference>
<dbReference type="GO" id="GO:0046168">
    <property type="term" value="P:glycerol-3-phosphate catabolic process"/>
    <property type="evidence" value="ECO:0007669"/>
    <property type="project" value="InterPro"/>
</dbReference>
<dbReference type="GO" id="GO:0006650">
    <property type="term" value="P:glycerophospholipid metabolic process"/>
    <property type="evidence" value="ECO:0007669"/>
    <property type="project" value="UniProtKB-UniRule"/>
</dbReference>
<dbReference type="GO" id="GO:0008654">
    <property type="term" value="P:phospholipid biosynthetic process"/>
    <property type="evidence" value="ECO:0007669"/>
    <property type="project" value="UniProtKB-KW"/>
</dbReference>
<dbReference type="FunFam" id="1.10.1040.10:FF:000001">
    <property type="entry name" value="Glycerol-3-phosphate dehydrogenase [NAD(P)+]"/>
    <property type="match status" value="1"/>
</dbReference>
<dbReference type="FunFam" id="3.40.50.720:FF:000019">
    <property type="entry name" value="Glycerol-3-phosphate dehydrogenase [NAD(P)+]"/>
    <property type="match status" value="1"/>
</dbReference>
<dbReference type="Gene3D" id="1.10.1040.10">
    <property type="entry name" value="N-(1-d-carboxylethyl)-l-norvaline Dehydrogenase, domain 2"/>
    <property type="match status" value="1"/>
</dbReference>
<dbReference type="Gene3D" id="3.40.50.720">
    <property type="entry name" value="NAD(P)-binding Rossmann-like Domain"/>
    <property type="match status" value="1"/>
</dbReference>
<dbReference type="HAMAP" id="MF_00394">
    <property type="entry name" value="NAD_Glyc3P_dehydrog"/>
    <property type="match status" value="1"/>
</dbReference>
<dbReference type="InterPro" id="IPR008927">
    <property type="entry name" value="6-PGluconate_DH-like_C_sf"/>
</dbReference>
<dbReference type="InterPro" id="IPR013328">
    <property type="entry name" value="6PGD_dom2"/>
</dbReference>
<dbReference type="InterPro" id="IPR006168">
    <property type="entry name" value="G3P_DH_NAD-dep"/>
</dbReference>
<dbReference type="InterPro" id="IPR006109">
    <property type="entry name" value="G3P_DH_NAD-dep_C"/>
</dbReference>
<dbReference type="InterPro" id="IPR011128">
    <property type="entry name" value="G3P_DH_NAD-dep_N"/>
</dbReference>
<dbReference type="InterPro" id="IPR036291">
    <property type="entry name" value="NAD(P)-bd_dom_sf"/>
</dbReference>
<dbReference type="NCBIfam" id="NF000940">
    <property type="entry name" value="PRK00094.1-2"/>
    <property type="match status" value="1"/>
</dbReference>
<dbReference type="NCBIfam" id="NF000942">
    <property type="entry name" value="PRK00094.1-4"/>
    <property type="match status" value="1"/>
</dbReference>
<dbReference type="PANTHER" id="PTHR11728">
    <property type="entry name" value="GLYCEROL-3-PHOSPHATE DEHYDROGENASE"/>
    <property type="match status" value="1"/>
</dbReference>
<dbReference type="PANTHER" id="PTHR11728:SF1">
    <property type="entry name" value="GLYCEROL-3-PHOSPHATE DEHYDROGENASE [NAD(+)] 2, CHLOROPLASTIC"/>
    <property type="match status" value="1"/>
</dbReference>
<dbReference type="Pfam" id="PF07479">
    <property type="entry name" value="NAD_Gly3P_dh_C"/>
    <property type="match status" value="1"/>
</dbReference>
<dbReference type="Pfam" id="PF01210">
    <property type="entry name" value="NAD_Gly3P_dh_N"/>
    <property type="match status" value="1"/>
</dbReference>
<dbReference type="PIRSF" id="PIRSF000114">
    <property type="entry name" value="Glycerol-3-P_dh"/>
    <property type="match status" value="1"/>
</dbReference>
<dbReference type="PRINTS" id="PR00077">
    <property type="entry name" value="GPDHDRGNASE"/>
</dbReference>
<dbReference type="SUPFAM" id="SSF48179">
    <property type="entry name" value="6-phosphogluconate dehydrogenase C-terminal domain-like"/>
    <property type="match status" value="1"/>
</dbReference>
<dbReference type="SUPFAM" id="SSF51735">
    <property type="entry name" value="NAD(P)-binding Rossmann-fold domains"/>
    <property type="match status" value="1"/>
</dbReference>
<evidence type="ECO:0000255" key="1">
    <source>
        <dbReference type="HAMAP-Rule" id="MF_00394"/>
    </source>
</evidence>
<organism>
    <name type="scientific">Nitrosospira multiformis (strain ATCC 25196 / NCIMB 11849 / C 71)</name>
    <dbReference type="NCBI Taxonomy" id="323848"/>
    <lineage>
        <taxon>Bacteria</taxon>
        <taxon>Pseudomonadati</taxon>
        <taxon>Pseudomonadota</taxon>
        <taxon>Betaproteobacteria</taxon>
        <taxon>Nitrosomonadales</taxon>
        <taxon>Nitrosomonadaceae</taxon>
        <taxon>Nitrosospira</taxon>
    </lineage>
</organism>
<name>GPDA_NITMU</name>
<sequence length="333" mass="35020">MRIAVMGAGAWGTALALSLCASTASSHQVTLWTRSRQHLADLVSQRINRRYFSAFPLPASLRLTAGLEEAVEDAELALIVVPVSGLRETLREIAASGKKIPVIWGCKGFESQSAKLPHQVAEEEYAGAAPYGVLSGPSFALEIAQGLPAALTLASRDGEFAREVAAQLHAPRLRVYSCTDVVGVETGGAVKNVISIAAGICDGMGFGSNARAALITRGLAEITRLGLKLGGRMETFLGLTGVGDLILTCTGDLSRNRRVGLALAAGRSLPDILQELGHIAEGVHTAREVLRLSHLLGIEMPITKGVCSILDDGVPAGQAVEALLNREPKSEIY</sequence>
<keyword id="KW-0963">Cytoplasm</keyword>
<keyword id="KW-0444">Lipid biosynthesis</keyword>
<keyword id="KW-0443">Lipid metabolism</keyword>
<keyword id="KW-0520">NAD</keyword>
<keyword id="KW-0521">NADP</keyword>
<keyword id="KW-0547">Nucleotide-binding</keyword>
<keyword id="KW-0560">Oxidoreductase</keyword>
<keyword id="KW-0594">Phospholipid biosynthesis</keyword>
<keyword id="KW-1208">Phospholipid metabolism</keyword>
<keyword id="KW-1185">Reference proteome</keyword>